<gene>
    <name evidence="1" type="primary">pcm</name>
    <name type="ordered locus">KPK_1018</name>
</gene>
<evidence type="ECO:0000255" key="1">
    <source>
        <dbReference type="HAMAP-Rule" id="MF_00090"/>
    </source>
</evidence>
<feature type="chain" id="PRO_1000093259" description="Protein-L-isoaspartate O-methyltransferase">
    <location>
        <begin position="1"/>
        <end position="208"/>
    </location>
</feature>
<feature type="active site" evidence="1">
    <location>
        <position position="59"/>
    </location>
</feature>
<sequence>MVSKRVESLLNQLRTQGIVDERVLEAIALVPREKFVDEAFEHKAWENTALPIGQGQTISQPYMVARMTELLTLTPESRVLEIGTGSGYQTAILAHLVHHVCSVERIKSLQWQARRRLKQLDLHNVSTRHGDGWQGWQARAPFDAIIVTAAPPEIPTALLAQLDDEGVLVLPVGEEHQFLKRIRRRGNEFIIDTVEAVRFVPLVKGELA</sequence>
<organism>
    <name type="scientific">Klebsiella pneumoniae (strain 342)</name>
    <dbReference type="NCBI Taxonomy" id="507522"/>
    <lineage>
        <taxon>Bacteria</taxon>
        <taxon>Pseudomonadati</taxon>
        <taxon>Pseudomonadota</taxon>
        <taxon>Gammaproteobacteria</taxon>
        <taxon>Enterobacterales</taxon>
        <taxon>Enterobacteriaceae</taxon>
        <taxon>Klebsiella/Raoultella group</taxon>
        <taxon>Klebsiella</taxon>
        <taxon>Klebsiella pneumoniae complex</taxon>
    </lineage>
</organism>
<reference key="1">
    <citation type="journal article" date="2008" name="PLoS Genet.">
        <title>Complete genome sequence of the N2-fixing broad host range endophyte Klebsiella pneumoniae 342 and virulence predictions verified in mice.</title>
        <authorList>
            <person name="Fouts D.E."/>
            <person name="Tyler H.L."/>
            <person name="DeBoy R.T."/>
            <person name="Daugherty S."/>
            <person name="Ren Q."/>
            <person name="Badger J.H."/>
            <person name="Durkin A.S."/>
            <person name="Huot H."/>
            <person name="Shrivastava S."/>
            <person name="Kothari S."/>
            <person name="Dodson R.J."/>
            <person name="Mohamoud Y."/>
            <person name="Khouri H."/>
            <person name="Roesch L.F.W."/>
            <person name="Krogfelt K.A."/>
            <person name="Struve C."/>
            <person name="Triplett E.W."/>
            <person name="Methe B.A."/>
        </authorList>
    </citation>
    <scope>NUCLEOTIDE SEQUENCE [LARGE SCALE GENOMIC DNA]</scope>
    <source>
        <strain>342</strain>
    </source>
</reference>
<name>PIMT_KLEP3</name>
<dbReference type="EC" id="2.1.1.77" evidence="1"/>
<dbReference type="EMBL" id="CP000964">
    <property type="protein sequence ID" value="ACI10088.1"/>
    <property type="molecule type" value="Genomic_DNA"/>
</dbReference>
<dbReference type="SMR" id="B5XV38"/>
<dbReference type="KEGG" id="kpe:KPK_1018"/>
<dbReference type="HOGENOM" id="CLU_055432_2_0_6"/>
<dbReference type="Proteomes" id="UP000001734">
    <property type="component" value="Chromosome"/>
</dbReference>
<dbReference type="GO" id="GO:0005737">
    <property type="term" value="C:cytoplasm"/>
    <property type="evidence" value="ECO:0007669"/>
    <property type="project" value="UniProtKB-SubCell"/>
</dbReference>
<dbReference type="GO" id="GO:0004719">
    <property type="term" value="F:protein-L-isoaspartate (D-aspartate) O-methyltransferase activity"/>
    <property type="evidence" value="ECO:0007669"/>
    <property type="project" value="UniProtKB-UniRule"/>
</dbReference>
<dbReference type="GO" id="GO:0032259">
    <property type="term" value="P:methylation"/>
    <property type="evidence" value="ECO:0007669"/>
    <property type="project" value="UniProtKB-KW"/>
</dbReference>
<dbReference type="GO" id="GO:0036211">
    <property type="term" value="P:protein modification process"/>
    <property type="evidence" value="ECO:0007669"/>
    <property type="project" value="UniProtKB-UniRule"/>
</dbReference>
<dbReference type="GO" id="GO:0030091">
    <property type="term" value="P:protein repair"/>
    <property type="evidence" value="ECO:0007669"/>
    <property type="project" value="UniProtKB-UniRule"/>
</dbReference>
<dbReference type="CDD" id="cd02440">
    <property type="entry name" value="AdoMet_MTases"/>
    <property type="match status" value="1"/>
</dbReference>
<dbReference type="FunFam" id="3.40.50.150:FF:000010">
    <property type="entry name" value="Protein-L-isoaspartate O-methyltransferase"/>
    <property type="match status" value="1"/>
</dbReference>
<dbReference type="Gene3D" id="3.40.50.150">
    <property type="entry name" value="Vaccinia Virus protein VP39"/>
    <property type="match status" value="1"/>
</dbReference>
<dbReference type="HAMAP" id="MF_00090">
    <property type="entry name" value="PIMT"/>
    <property type="match status" value="1"/>
</dbReference>
<dbReference type="InterPro" id="IPR000682">
    <property type="entry name" value="PCMT"/>
</dbReference>
<dbReference type="InterPro" id="IPR029063">
    <property type="entry name" value="SAM-dependent_MTases_sf"/>
</dbReference>
<dbReference type="NCBIfam" id="TIGR00080">
    <property type="entry name" value="pimt"/>
    <property type="match status" value="1"/>
</dbReference>
<dbReference type="NCBIfam" id="NF001453">
    <property type="entry name" value="PRK00312.1"/>
    <property type="match status" value="1"/>
</dbReference>
<dbReference type="PANTHER" id="PTHR11579">
    <property type="entry name" value="PROTEIN-L-ISOASPARTATE O-METHYLTRANSFERASE"/>
    <property type="match status" value="1"/>
</dbReference>
<dbReference type="PANTHER" id="PTHR11579:SF0">
    <property type="entry name" value="PROTEIN-L-ISOASPARTATE(D-ASPARTATE) O-METHYLTRANSFERASE"/>
    <property type="match status" value="1"/>
</dbReference>
<dbReference type="Pfam" id="PF01135">
    <property type="entry name" value="PCMT"/>
    <property type="match status" value="1"/>
</dbReference>
<dbReference type="SUPFAM" id="SSF53335">
    <property type="entry name" value="S-adenosyl-L-methionine-dependent methyltransferases"/>
    <property type="match status" value="1"/>
</dbReference>
<dbReference type="PROSITE" id="PS01279">
    <property type="entry name" value="PCMT"/>
    <property type="match status" value="1"/>
</dbReference>
<proteinExistence type="inferred from homology"/>
<comment type="function">
    <text evidence="1">Catalyzes the methyl esterification of L-isoaspartyl residues in peptides and proteins that result from spontaneous decomposition of normal L-aspartyl and L-asparaginyl residues. It plays a role in the repair and/or degradation of damaged proteins.</text>
</comment>
<comment type="catalytic activity">
    <reaction evidence="1">
        <text>[protein]-L-isoaspartate + S-adenosyl-L-methionine = [protein]-L-isoaspartate alpha-methyl ester + S-adenosyl-L-homocysteine</text>
        <dbReference type="Rhea" id="RHEA:12705"/>
        <dbReference type="Rhea" id="RHEA-COMP:12143"/>
        <dbReference type="Rhea" id="RHEA-COMP:12144"/>
        <dbReference type="ChEBI" id="CHEBI:57856"/>
        <dbReference type="ChEBI" id="CHEBI:59789"/>
        <dbReference type="ChEBI" id="CHEBI:90596"/>
        <dbReference type="ChEBI" id="CHEBI:90598"/>
        <dbReference type="EC" id="2.1.1.77"/>
    </reaction>
</comment>
<comment type="subcellular location">
    <subcellularLocation>
        <location evidence="1">Cytoplasm</location>
    </subcellularLocation>
</comment>
<comment type="similarity">
    <text evidence="1">Belongs to the methyltransferase superfamily. L-isoaspartyl/D-aspartyl protein methyltransferase family.</text>
</comment>
<protein>
    <recommendedName>
        <fullName evidence="1">Protein-L-isoaspartate O-methyltransferase</fullName>
        <ecNumber evidence="1">2.1.1.77</ecNumber>
    </recommendedName>
    <alternativeName>
        <fullName evidence="1">L-isoaspartyl protein carboxyl methyltransferase</fullName>
    </alternativeName>
    <alternativeName>
        <fullName evidence="1">Protein L-isoaspartyl methyltransferase</fullName>
    </alternativeName>
    <alternativeName>
        <fullName evidence="1">Protein-beta-aspartate methyltransferase</fullName>
        <shortName evidence="1">PIMT</shortName>
    </alternativeName>
</protein>
<keyword id="KW-0963">Cytoplasm</keyword>
<keyword id="KW-0489">Methyltransferase</keyword>
<keyword id="KW-0949">S-adenosyl-L-methionine</keyword>
<keyword id="KW-0808">Transferase</keyword>
<accession>B5XV38</accession>